<name>TTCA_PSYA2</name>
<gene>
    <name evidence="1" type="primary">ttcA</name>
    <name type="ordered locus">Psyc_0772</name>
</gene>
<sequence>MTAATLFTQQTTPQFDKASIDTDVNHHAKTTAIEAMLYDDSDDRNDDFMDEQADKILADTQSLTESAYFRKLQKKLRRQVSWAIRDFNMIEDGDVVMVCVSGGKDSYTLLDILLLLKRIAPIHFDIVAVNLDQKQPGYPEEVLPAYLNEQGIAHYILEKDTYSIVKSVVPEGKTYCSACSRLRRGSLYGFAKQIGATKIALGHHRDDMLATFFLNLFHGGALKSMPPKLLSDDKQNMLIRPLAYVEEKDIIEYARLKEFPIIPCNLCGSQTNLQRAIINDMLREWDDAHPQRLASIFKAMQNVAPSQLADRELFDFETLSLERDDNERLFEGDNIQAGQIESLAEIGLPVAPATQIFNPNFVDTEKGSHTPKKIPTINPVI</sequence>
<reference key="1">
    <citation type="journal article" date="2010" name="Appl. Environ. Microbiol.">
        <title>The genome sequence of Psychrobacter arcticus 273-4, a psychroactive Siberian permafrost bacterium, reveals mechanisms for adaptation to low-temperature growth.</title>
        <authorList>
            <person name="Ayala-del-Rio H.L."/>
            <person name="Chain P.S."/>
            <person name="Grzymski J.J."/>
            <person name="Ponder M.A."/>
            <person name="Ivanova N."/>
            <person name="Bergholz P.W."/>
            <person name="Di Bartolo G."/>
            <person name="Hauser L."/>
            <person name="Land M."/>
            <person name="Bakermans C."/>
            <person name="Rodrigues D."/>
            <person name="Klappenbach J."/>
            <person name="Zarka D."/>
            <person name="Larimer F."/>
            <person name="Richardson P."/>
            <person name="Murray A."/>
            <person name="Thomashow M."/>
            <person name="Tiedje J.M."/>
        </authorList>
    </citation>
    <scope>NUCLEOTIDE SEQUENCE [LARGE SCALE GENOMIC DNA]</scope>
    <source>
        <strain>DSM 17307 / VKM B-2377 / 273-4</strain>
    </source>
</reference>
<comment type="function">
    <text evidence="1">Catalyzes the ATP-dependent 2-thiolation of cytidine in position 32 of tRNA, to form 2-thiocytidine (s(2)C32). The sulfur atoms are provided by the cysteine/cysteine desulfurase (IscS) system.</text>
</comment>
<comment type="catalytic activity">
    <reaction evidence="1">
        <text>cytidine(32) in tRNA + S-sulfanyl-L-cysteinyl-[cysteine desulfurase] + AH2 + ATP = 2-thiocytidine(32) in tRNA + L-cysteinyl-[cysteine desulfurase] + A + AMP + diphosphate + H(+)</text>
        <dbReference type="Rhea" id="RHEA:57048"/>
        <dbReference type="Rhea" id="RHEA-COMP:10288"/>
        <dbReference type="Rhea" id="RHEA-COMP:12157"/>
        <dbReference type="Rhea" id="RHEA-COMP:12158"/>
        <dbReference type="Rhea" id="RHEA-COMP:14821"/>
        <dbReference type="ChEBI" id="CHEBI:13193"/>
        <dbReference type="ChEBI" id="CHEBI:15378"/>
        <dbReference type="ChEBI" id="CHEBI:17499"/>
        <dbReference type="ChEBI" id="CHEBI:29950"/>
        <dbReference type="ChEBI" id="CHEBI:30616"/>
        <dbReference type="ChEBI" id="CHEBI:33019"/>
        <dbReference type="ChEBI" id="CHEBI:61963"/>
        <dbReference type="ChEBI" id="CHEBI:82748"/>
        <dbReference type="ChEBI" id="CHEBI:141453"/>
        <dbReference type="ChEBI" id="CHEBI:456215"/>
    </reaction>
    <physiologicalReaction direction="left-to-right" evidence="1">
        <dbReference type="Rhea" id="RHEA:57049"/>
    </physiologicalReaction>
</comment>
<comment type="cofactor">
    <cofactor evidence="1">
        <name>Mg(2+)</name>
        <dbReference type="ChEBI" id="CHEBI:18420"/>
    </cofactor>
</comment>
<comment type="cofactor">
    <cofactor evidence="1">
        <name>[4Fe-4S] cluster</name>
        <dbReference type="ChEBI" id="CHEBI:49883"/>
    </cofactor>
    <text evidence="1">Binds 1 [4Fe-4S] cluster per subunit. The cluster is chelated by three Cys residues, the fourth Fe has a free coordination site that may bind a sulfur atom transferred from the persulfide of IscS.</text>
</comment>
<comment type="pathway">
    <text evidence="1">tRNA modification.</text>
</comment>
<comment type="subunit">
    <text evidence="1">Homodimer.</text>
</comment>
<comment type="subcellular location">
    <subcellularLocation>
        <location evidence="1">Cytoplasm</location>
    </subcellularLocation>
</comment>
<comment type="miscellaneous">
    <text evidence="1">The thiolation reaction likely consists of two steps: a first activation step by ATP to form an adenylated intermediate of the target base of tRNA, and a second nucleophilic substitution step of the sulfur (S) atom supplied by the hydrosulfide attached to the Fe-S cluster.</text>
</comment>
<comment type="similarity">
    <text evidence="1">Belongs to the TtcA family.</text>
</comment>
<protein>
    <recommendedName>
        <fullName evidence="1">tRNA-cytidine(32) 2-sulfurtransferase</fullName>
        <ecNumber evidence="1">2.8.1.-</ecNumber>
    </recommendedName>
    <alternativeName>
        <fullName evidence="1">Two-thiocytidine biosynthesis protein A</fullName>
    </alternativeName>
    <alternativeName>
        <fullName evidence="1">tRNA 2-thiocytidine biosynthesis protein TtcA</fullName>
    </alternativeName>
</protein>
<accession>Q4FTN3</accession>
<evidence type="ECO:0000255" key="1">
    <source>
        <dbReference type="HAMAP-Rule" id="MF_01850"/>
    </source>
</evidence>
<organism>
    <name type="scientific">Psychrobacter arcticus (strain DSM 17307 / VKM B-2377 / 273-4)</name>
    <dbReference type="NCBI Taxonomy" id="259536"/>
    <lineage>
        <taxon>Bacteria</taxon>
        <taxon>Pseudomonadati</taxon>
        <taxon>Pseudomonadota</taxon>
        <taxon>Gammaproteobacteria</taxon>
        <taxon>Moraxellales</taxon>
        <taxon>Moraxellaceae</taxon>
        <taxon>Psychrobacter</taxon>
    </lineage>
</organism>
<feature type="chain" id="PRO_0000348806" description="tRNA-cytidine(32) 2-sulfurtransferase">
    <location>
        <begin position="1"/>
        <end position="381"/>
    </location>
</feature>
<feature type="short sequence motif" description="PP-loop motif" evidence="1">
    <location>
        <begin position="101"/>
        <end position="106"/>
    </location>
</feature>
<feature type="binding site" evidence="1">
    <location>
        <position position="176"/>
    </location>
    <ligand>
        <name>[4Fe-4S] cluster</name>
        <dbReference type="ChEBI" id="CHEBI:49883"/>
    </ligand>
</feature>
<feature type="binding site" evidence="1">
    <location>
        <position position="179"/>
    </location>
    <ligand>
        <name>[4Fe-4S] cluster</name>
        <dbReference type="ChEBI" id="CHEBI:49883"/>
    </ligand>
</feature>
<feature type="binding site" evidence="1">
    <location>
        <position position="267"/>
    </location>
    <ligand>
        <name>[4Fe-4S] cluster</name>
        <dbReference type="ChEBI" id="CHEBI:49883"/>
    </ligand>
</feature>
<dbReference type="EC" id="2.8.1.-" evidence="1"/>
<dbReference type="EMBL" id="CP000082">
    <property type="protein sequence ID" value="AAZ18625.1"/>
    <property type="molecule type" value="Genomic_DNA"/>
</dbReference>
<dbReference type="RefSeq" id="WP_011280052.1">
    <property type="nucleotide sequence ID" value="NC_007204.1"/>
</dbReference>
<dbReference type="SMR" id="Q4FTN3"/>
<dbReference type="STRING" id="259536.Psyc_0772"/>
<dbReference type="KEGG" id="par:Psyc_0772"/>
<dbReference type="eggNOG" id="COG0037">
    <property type="taxonomic scope" value="Bacteria"/>
</dbReference>
<dbReference type="HOGENOM" id="CLU_026481_3_0_6"/>
<dbReference type="OrthoDB" id="9801054at2"/>
<dbReference type="Proteomes" id="UP000000546">
    <property type="component" value="Chromosome"/>
</dbReference>
<dbReference type="GO" id="GO:0005737">
    <property type="term" value="C:cytoplasm"/>
    <property type="evidence" value="ECO:0007669"/>
    <property type="project" value="UniProtKB-SubCell"/>
</dbReference>
<dbReference type="GO" id="GO:0051539">
    <property type="term" value="F:4 iron, 4 sulfur cluster binding"/>
    <property type="evidence" value="ECO:0007669"/>
    <property type="project" value="UniProtKB-UniRule"/>
</dbReference>
<dbReference type="GO" id="GO:0005524">
    <property type="term" value="F:ATP binding"/>
    <property type="evidence" value="ECO:0007669"/>
    <property type="project" value="UniProtKB-UniRule"/>
</dbReference>
<dbReference type="GO" id="GO:0000287">
    <property type="term" value="F:magnesium ion binding"/>
    <property type="evidence" value="ECO:0007669"/>
    <property type="project" value="UniProtKB-UniRule"/>
</dbReference>
<dbReference type="GO" id="GO:0016783">
    <property type="term" value="F:sulfurtransferase activity"/>
    <property type="evidence" value="ECO:0007669"/>
    <property type="project" value="UniProtKB-UniRule"/>
</dbReference>
<dbReference type="GO" id="GO:0000049">
    <property type="term" value="F:tRNA binding"/>
    <property type="evidence" value="ECO:0007669"/>
    <property type="project" value="UniProtKB-KW"/>
</dbReference>
<dbReference type="GO" id="GO:0034227">
    <property type="term" value="P:tRNA thio-modification"/>
    <property type="evidence" value="ECO:0007669"/>
    <property type="project" value="UniProtKB-UniRule"/>
</dbReference>
<dbReference type="CDD" id="cd24138">
    <property type="entry name" value="TtcA-like"/>
    <property type="match status" value="1"/>
</dbReference>
<dbReference type="Gene3D" id="3.40.50.620">
    <property type="entry name" value="HUPs"/>
    <property type="match status" value="1"/>
</dbReference>
<dbReference type="HAMAP" id="MF_01850">
    <property type="entry name" value="TtcA"/>
    <property type="match status" value="1"/>
</dbReference>
<dbReference type="InterPro" id="IPR014729">
    <property type="entry name" value="Rossmann-like_a/b/a_fold"/>
</dbReference>
<dbReference type="InterPro" id="IPR011063">
    <property type="entry name" value="TilS/TtcA_N"/>
</dbReference>
<dbReference type="InterPro" id="IPR012089">
    <property type="entry name" value="tRNA_Cyd_32_2_STrfase"/>
</dbReference>
<dbReference type="NCBIfam" id="NF007972">
    <property type="entry name" value="PRK10696.1"/>
    <property type="match status" value="1"/>
</dbReference>
<dbReference type="PANTHER" id="PTHR43686:SF1">
    <property type="entry name" value="AMINOTRAN_5 DOMAIN-CONTAINING PROTEIN"/>
    <property type="match status" value="1"/>
</dbReference>
<dbReference type="PANTHER" id="PTHR43686">
    <property type="entry name" value="SULFURTRANSFERASE-RELATED"/>
    <property type="match status" value="1"/>
</dbReference>
<dbReference type="Pfam" id="PF01171">
    <property type="entry name" value="ATP_bind_3"/>
    <property type="match status" value="1"/>
</dbReference>
<dbReference type="SUPFAM" id="SSF52402">
    <property type="entry name" value="Adenine nucleotide alpha hydrolases-like"/>
    <property type="match status" value="1"/>
</dbReference>
<proteinExistence type="inferred from homology"/>
<keyword id="KW-0004">4Fe-4S</keyword>
<keyword id="KW-0067">ATP-binding</keyword>
<keyword id="KW-0963">Cytoplasm</keyword>
<keyword id="KW-0408">Iron</keyword>
<keyword id="KW-0411">Iron-sulfur</keyword>
<keyword id="KW-0460">Magnesium</keyword>
<keyword id="KW-0479">Metal-binding</keyword>
<keyword id="KW-0547">Nucleotide-binding</keyword>
<keyword id="KW-1185">Reference proteome</keyword>
<keyword id="KW-0694">RNA-binding</keyword>
<keyword id="KW-0808">Transferase</keyword>
<keyword id="KW-0819">tRNA processing</keyword>
<keyword id="KW-0820">tRNA-binding</keyword>